<evidence type="ECO:0000305" key="1"/>
<proteinExistence type="evidence at transcript level"/>
<keyword id="KW-0880">Kelch repeat</keyword>
<keyword id="KW-1185">Reference proteome</keyword>
<keyword id="KW-0677">Repeat</keyword>
<feature type="chain" id="PRO_0000283204" description="F-box/kelch-repeat protein At2g43445">
    <location>
        <begin position="1"/>
        <end position="405"/>
    </location>
</feature>
<feature type="domain" description="F-box">
    <location>
        <begin position="7"/>
        <end position="53"/>
    </location>
</feature>
<feature type="repeat" description="Kelch 1">
    <location>
        <begin position="146"/>
        <end position="197"/>
    </location>
</feature>
<feature type="repeat" description="Kelch 2">
    <location>
        <begin position="356"/>
        <end position="400"/>
    </location>
</feature>
<comment type="sequence caution" evidence="1">
    <conflict type="erroneous gene model prediction">
        <sequence resource="EMBL-CDS" id="AAB64340"/>
    </conflict>
    <text>The predicted gene At2g43440 has been split into 2 genes: At2g43440 and At2g43445.</text>
</comment>
<reference key="1">
    <citation type="journal article" date="1999" name="Nature">
        <title>Sequence and analysis of chromosome 2 of the plant Arabidopsis thaliana.</title>
        <authorList>
            <person name="Lin X."/>
            <person name="Kaul S."/>
            <person name="Rounsley S.D."/>
            <person name="Shea T.P."/>
            <person name="Benito M.-I."/>
            <person name="Town C.D."/>
            <person name="Fujii C.Y."/>
            <person name="Mason T.M."/>
            <person name="Bowman C.L."/>
            <person name="Barnstead M.E."/>
            <person name="Feldblyum T.V."/>
            <person name="Buell C.R."/>
            <person name="Ketchum K.A."/>
            <person name="Lee J.J."/>
            <person name="Ronning C.M."/>
            <person name="Koo H.L."/>
            <person name="Moffat K.S."/>
            <person name="Cronin L.A."/>
            <person name="Shen M."/>
            <person name="Pai G."/>
            <person name="Van Aken S."/>
            <person name="Umayam L."/>
            <person name="Tallon L.J."/>
            <person name="Gill J.E."/>
            <person name="Adams M.D."/>
            <person name="Carrera A.J."/>
            <person name="Creasy T.H."/>
            <person name="Goodman H.M."/>
            <person name="Somerville C.R."/>
            <person name="Copenhaver G.P."/>
            <person name="Preuss D."/>
            <person name="Nierman W.C."/>
            <person name="White O."/>
            <person name="Eisen J.A."/>
            <person name="Salzberg S.L."/>
            <person name="Fraser C.M."/>
            <person name="Venter J.C."/>
        </authorList>
    </citation>
    <scope>NUCLEOTIDE SEQUENCE [LARGE SCALE GENOMIC DNA]</scope>
    <source>
        <strain>cv. Columbia</strain>
    </source>
</reference>
<reference key="2">
    <citation type="journal article" date="2017" name="Plant J.">
        <title>Araport11: a complete reannotation of the Arabidopsis thaliana reference genome.</title>
        <authorList>
            <person name="Cheng C.Y."/>
            <person name="Krishnakumar V."/>
            <person name="Chan A.P."/>
            <person name="Thibaud-Nissen F."/>
            <person name="Schobel S."/>
            <person name="Town C.D."/>
        </authorList>
    </citation>
    <scope>GENOME REANNOTATION</scope>
    <source>
        <strain>cv. Columbia</strain>
    </source>
</reference>
<reference key="3">
    <citation type="submission" date="2006-07" db="EMBL/GenBank/DDBJ databases">
        <title>Large-scale analysis of RIKEN Arabidopsis full-length (RAFL) cDNAs.</title>
        <authorList>
            <person name="Totoki Y."/>
            <person name="Seki M."/>
            <person name="Ishida J."/>
            <person name="Nakajima M."/>
            <person name="Enju A."/>
            <person name="Kamiya A."/>
            <person name="Narusaka M."/>
            <person name="Shin-i T."/>
            <person name="Nakagawa M."/>
            <person name="Sakamoto N."/>
            <person name="Oishi K."/>
            <person name="Kohara Y."/>
            <person name="Kobayashi M."/>
            <person name="Toyoda A."/>
            <person name="Sakaki Y."/>
            <person name="Sakurai T."/>
            <person name="Iida K."/>
            <person name="Akiyama K."/>
            <person name="Satou M."/>
            <person name="Toyoda T."/>
            <person name="Konagaya A."/>
            <person name="Carninci P."/>
            <person name="Kawai J."/>
            <person name="Hayashizaki Y."/>
            <person name="Shinozaki K."/>
        </authorList>
    </citation>
    <scope>NUCLEOTIDE SEQUENCE [LARGE SCALE MRNA]</scope>
    <source>
        <strain>cv. Columbia</strain>
    </source>
</reference>
<protein>
    <recommendedName>
        <fullName>F-box/kelch-repeat protein At2g43445</fullName>
    </recommendedName>
</protein>
<accession>Q0WRU9</accession>
<accession>O22858</accession>
<accession>Q56YI6</accession>
<gene>
    <name type="ordered locus">At2g43445</name>
    <name type="ORF">T1O24.18</name>
</gene>
<name>FBK44_ARATH</name>
<organism>
    <name type="scientific">Arabidopsis thaliana</name>
    <name type="common">Mouse-ear cress</name>
    <dbReference type="NCBI Taxonomy" id="3702"/>
    <lineage>
        <taxon>Eukaryota</taxon>
        <taxon>Viridiplantae</taxon>
        <taxon>Streptophyta</taxon>
        <taxon>Embryophyta</taxon>
        <taxon>Tracheophyta</taxon>
        <taxon>Spermatophyta</taxon>
        <taxon>Magnoliopsida</taxon>
        <taxon>eudicotyledons</taxon>
        <taxon>Gunneridae</taxon>
        <taxon>Pentapetalae</taxon>
        <taxon>rosids</taxon>
        <taxon>malvids</taxon>
        <taxon>Brassicales</taxon>
        <taxon>Brassicaceae</taxon>
        <taxon>Camelineae</taxon>
        <taxon>Arabidopsis</taxon>
    </lineage>
</organism>
<sequence>MEEERENTNSIYIVSELLEEIFLGLPLKSILKFKTVSKQWRSILESNLFVERRRTLQKNHPKILAAYNCDYCTRPGILPKSQFEGDEEIVYLHTDATQPSMTCDGLVCITEPGWFNVLNVSTGQLRRFLPGPDPGPQANWLLGFGRDKVTGKYKIVRMCFHDCYEFGILDIESGEWSKLMSPPHIMRVGSKSVCVNGSIYWLQISVSYIILALDLHQETFNGVYHLPATWVTQDTQLVNLEDRLAMAMTTKVGPEWILEIWSMDIEEKGWSKRYTWSKAYSISLAHRVVVSWPWQKRWFTPVSVSKQGNLVFYDNHKRLFKYYSGTDEIRCLSSNINVISSYVENLAPLPLKPSHTHHDLGNSNSKFSTSRCHLFPTRGSWISKVFRRNVLFTSLVVVGYIYLPL</sequence>
<dbReference type="EMBL" id="AC002335">
    <property type="protein sequence ID" value="AAB64340.1"/>
    <property type="status" value="ALT_SEQ"/>
    <property type="molecule type" value="Genomic_DNA"/>
</dbReference>
<dbReference type="EMBL" id="CP002685">
    <property type="protein sequence ID" value="AEC10270.1"/>
    <property type="molecule type" value="Genomic_DNA"/>
</dbReference>
<dbReference type="EMBL" id="AK221336">
    <property type="protein sequence ID" value="BAD94157.1"/>
    <property type="molecule type" value="mRNA"/>
</dbReference>
<dbReference type="EMBL" id="AK228196">
    <property type="protein sequence ID" value="BAF00150.1"/>
    <property type="molecule type" value="mRNA"/>
</dbReference>
<dbReference type="PIR" id="B84866">
    <property type="entry name" value="B84866"/>
</dbReference>
<dbReference type="RefSeq" id="NP_001078049.1">
    <property type="nucleotide sequence ID" value="NM_001084580.3"/>
</dbReference>
<dbReference type="SMR" id="Q0WRU9"/>
<dbReference type="FunCoup" id="Q0WRU9">
    <property type="interactions" value="1"/>
</dbReference>
<dbReference type="PaxDb" id="3702-AT2G43445.1"/>
<dbReference type="EnsemblPlants" id="AT2G43445.1">
    <property type="protein sequence ID" value="AT2G43445.1"/>
    <property type="gene ID" value="AT2G43445"/>
</dbReference>
<dbReference type="GeneID" id="5007959"/>
<dbReference type="Gramene" id="AT2G43445.1">
    <property type="protein sequence ID" value="AT2G43445.1"/>
    <property type="gene ID" value="AT2G43445"/>
</dbReference>
<dbReference type="KEGG" id="ath:AT2G43445"/>
<dbReference type="Araport" id="AT2G43445"/>
<dbReference type="TAIR" id="AT2G43445"/>
<dbReference type="HOGENOM" id="CLU_027176_4_1_1"/>
<dbReference type="InParanoid" id="Q0WRU9"/>
<dbReference type="PhylomeDB" id="Q0WRU9"/>
<dbReference type="PRO" id="PR:Q0WRU9"/>
<dbReference type="Proteomes" id="UP000006548">
    <property type="component" value="Chromosome 2"/>
</dbReference>
<dbReference type="ExpressionAtlas" id="Q0WRU9">
    <property type="expression patterns" value="baseline and differential"/>
</dbReference>
<dbReference type="InterPro" id="IPR006527">
    <property type="entry name" value="F-box-assoc_dom_typ1"/>
</dbReference>
<dbReference type="InterPro" id="IPR017451">
    <property type="entry name" value="F-box-assoc_interact_dom"/>
</dbReference>
<dbReference type="InterPro" id="IPR036047">
    <property type="entry name" value="F-box-like_dom_sf"/>
</dbReference>
<dbReference type="InterPro" id="IPR001810">
    <property type="entry name" value="F-box_dom"/>
</dbReference>
<dbReference type="NCBIfam" id="TIGR01640">
    <property type="entry name" value="F_box_assoc_1"/>
    <property type="match status" value="1"/>
</dbReference>
<dbReference type="PANTHER" id="PTHR31111">
    <property type="entry name" value="BNAA05G37150D PROTEIN-RELATED"/>
    <property type="match status" value="1"/>
</dbReference>
<dbReference type="PANTHER" id="PTHR31111:SF113">
    <property type="entry name" value="F-BOX ASSOCIATED UBIQUITINATION EFFECTOR FAMILY PROTEIN"/>
    <property type="match status" value="1"/>
</dbReference>
<dbReference type="Pfam" id="PF00646">
    <property type="entry name" value="F-box"/>
    <property type="match status" value="1"/>
</dbReference>
<dbReference type="Pfam" id="PF07734">
    <property type="entry name" value="FBA_1"/>
    <property type="match status" value="1"/>
</dbReference>
<dbReference type="SMART" id="SM00256">
    <property type="entry name" value="FBOX"/>
    <property type="match status" value="1"/>
</dbReference>
<dbReference type="SUPFAM" id="SSF81383">
    <property type="entry name" value="F-box domain"/>
    <property type="match status" value="1"/>
</dbReference>